<proteinExistence type="evidence at transcript level"/>
<protein>
    <recommendedName>
        <fullName>Proteasome subunit alpha type-2</fullName>
    </recommendedName>
    <alternativeName>
        <fullName>20S proteasome subunit alpha-2</fullName>
    </alternativeName>
</protein>
<evidence type="ECO:0000250" key="1"/>
<evidence type="ECO:0000255" key="2">
    <source>
        <dbReference type="PROSITE-ProRule" id="PRU00808"/>
    </source>
</evidence>
<accession>Q9U793</accession>
<comment type="function">
    <text>The proteasome is a multicatalytic proteinase complex which is characterized by its ability to cleave peptides with Arg, Phe, Tyr, Leu, and Glu adjacent to the leaving group at neutral or slightly basic pH. The proteasome has an ATP-dependent proteolytic activity.</text>
</comment>
<comment type="subunit">
    <text evidence="1">The 26S proteasome consists of a 20S proteasome core and two 19S regulatory subunits. The 20S proteasome core is composed of 28 subunits that are arranged in four stacked rings, resulting in a barrel-shaped structure. The two end rings are each formed by seven alpha subunits, and the two central rings are each formed by seven beta subunits. The catalytic chamber with the active sites is on the inside of the barrel (By similarity).</text>
</comment>
<comment type="subcellular location">
    <subcellularLocation>
        <location evidence="1">Cytoplasm</location>
    </subcellularLocation>
    <subcellularLocation>
        <location evidence="1">Nucleus</location>
    </subcellularLocation>
</comment>
<comment type="similarity">
    <text evidence="2">Belongs to the peptidase T1A family.</text>
</comment>
<organism>
    <name type="scientific">Trypanosoma brucei brucei</name>
    <dbReference type="NCBI Taxonomy" id="5702"/>
    <lineage>
        <taxon>Eukaryota</taxon>
        <taxon>Discoba</taxon>
        <taxon>Euglenozoa</taxon>
        <taxon>Kinetoplastea</taxon>
        <taxon>Metakinetoplastina</taxon>
        <taxon>Trypanosomatida</taxon>
        <taxon>Trypanosomatidae</taxon>
        <taxon>Trypanosoma</taxon>
    </lineage>
</organism>
<reference key="1">
    <citation type="journal article" date="2001" name="J. Biol. Chem.">
        <title>Functional assignment of the 20 S proteasome from Trypanosoma brucei using mass spectrometry and new bioinformatics approaches.</title>
        <authorList>
            <person name="Huang L."/>
            <person name="Jacob R.J."/>
            <person name="Pegg S.C.H."/>
            <person name="Baldwin M.A."/>
            <person name="Wang C.C."/>
            <person name="Burlingame A.L."/>
            <person name="Babbitt P.C."/>
        </authorList>
    </citation>
    <scope>NUCLEOTIDE SEQUENCE [MRNA]</scope>
    <source>
        <strain>427</strain>
    </source>
</reference>
<keyword id="KW-0963">Cytoplasm</keyword>
<keyword id="KW-0539">Nucleus</keyword>
<keyword id="KW-0647">Proteasome</keyword>
<sequence length="231" mass="25355">MSESSYGLTTFSPSGRLVQIEYATTAASKGTTALGVKATDGVVIAAEKKTTSPLADSLTLHKVFALDDHVGCTYSGIGPDCRVLVDAARRACQRYRLTYHEPMPISQLVRQISFLFQEFTQSGGVRPFGCSLLVAGADSRGNHLYQLDPSGTFWTWKATSIGKGSPDARTFLEKRYTNEMEIEDAVHTALLTLKEGFDGRMTAENTQVGRVVEGRFELLTVEQLKDYLDQI</sequence>
<dbReference type="EMBL" id="AF148125">
    <property type="protein sequence ID" value="AAF05906.1"/>
    <property type="molecule type" value="mRNA"/>
</dbReference>
<dbReference type="SMR" id="Q9U793"/>
<dbReference type="OMA" id="ATCIGKD"/>
<dbReference type="BRENDA" id="3.4.25.1">
    <property type="organism ID" value="6519"/>
</dbReference>
<dbReference type="GO" id="GO:0005737">
    <property type="term" value="C:cytoplasm"/>
    <property type="evidence" value="ECO:0000314"/>
    <property type="project" value="GeneDB"/>
</dbReference>
<dbReference type="GO" id="GO:0005634">
    <property type="term" value="C:nucleus"/>
    <property type="evidence" value="ECO:0007669"/>
    <property type="project" value="UniProtKB-SubCell"/>
</dbReference>
<dbReference type="GO" id="GO:0019773">
    <property type="term" value="C:proteasome core complex, alpha-subunit complex"/>
    <property type="evidence" value="ECO:0000250"/>
    <property type="project" value="UniProtKB"/>
</dbReference>
<dbReference type="GO" id="GO:0004175">
    <property type="term" value="F:endopeptidase activity"/>
    <property type="evidence" value="ECO:0000255"/>
    <property type="project" value="GeneDB"/>
</dbReference>
<dbReference type="GO" id="GO:0006511">
    <property type="term" value="P:ubiquitin-dependent protein catabolic process"/>
    <property type="evidence" value="ECO:0000255"/>
    <property type="project" value="GeneDB"/>
</dbReference>
<dbReference type="CDD" id="cd03750">
    <property type="entry name" value="proteasome_alpha_type_2"/>
    <property type="match status" value="1"/>
</dbReference>
<dbReference type="Gene3D" id="3.60.20.10">
    <property type="entry name" value="Glutamine Phosphoribosylpyrophosphate, subunit 1, domain 1"/>
    <property type="match status" value="1"/>
</dbReference>
<dbReference type="InterPro" id="IPR029055">
    <property type="entry name" value="Ntn_hydrolases_N"/>
</dbReference>
<dbReference type="InterPro" id="IPR050115">
    <property type="entry name" value="Proteasome_alpha"/>
</dbReference>
<dbReference type="InterPro" id="IPR023332">
    <property type="entry name" value="Proteasome_alpha-type"/>
</dbReference>
<dbReference type="InterPro" id="IPR000426">
    <property type="entry name" value="Proteasome_asu_N"/>
</dbReference>
<dbReference type="InterPro" id="IPR001353">
    <property type="entry name" value="Proteasome_sua/b"/>
</dbReference>
<dbReference type="NCBIfam" id="NF003075">
    <property type="entry name" value="PRK03996.1"/>
    <property type="match status" value="1"/>
</dbReference>
<dbReference type="PANTHER" id="PTHR11599">
    <property type="entry name" value="PROTEASOME SUBUNIT ALPHA/BETA"/>
    <property type="match status" value="1"/>
</dbReference>
<dbReference type="Pfam" id="PF00227">
    <property type="entry name" value="Proteasome"/>
    <property type="match status" value="1"/>
</dbReference>
<dbReference type="Pfam" id="PF10584">
    <property type="entry name" value="Proteasome_A_N"/>
    <property type="match status" value="1"/>
</dbReference>
<dbReference type="SMART" id="SM00948">
    <property type="entry name" value="Proteasome_A_N"/>
    <property type="match status" value="1"/>
</dbReference>
<dbReference type="SUPFAM" id="SSF56235">
    <property type="entry name" value="N-terminal nucleophile aminohydrolases (Ntn hydrolases)"/>
    <property type="match status" value="1"/>
</dbReference>
<dbReference type="PROSITE" id="PS00388">
    <property type="entry name" value="PROTEASOME_ALPHA_1"/>
    <property type="match status" value="1"/>
</dbReference>
<dbReference type="PROSITE" id="PS51475">
    <property type="entry name" value="PROTEASOME_ALPHA_2"/>
    <property type="match status" value="1"/>
</dbReference>
<name>PSA2_TRYBB</name>
<feature type="chain" id="PRO_0000124084" description="Proteasome subunit alpha type-2">
    <location>
        <begin position="1"/>
        <end position="231"/>
    </location>
</feature>